<organism>
    <name type="scientific">Streptococcus agalactiae serotype III (strain NEM316)</name>
    <dbReference type="NCBI Taxonomy" id="211110"/>
    <lineage>
        <taxon>Bacteria</taxon>
        <taxon>Bacillati</taxon>
        <taxon>Bacillota</taxon>
        <taxon>Bacilli</taxon>
        <taxon>Lactobacillales</taxon>
        <taxon>Streptococcaceae</taxon>
        <taxon>Streptococcus</taxon>
    </lineage>
</organism>
<evidence type="ECO:0000255" key="1">
    <source>
        <dbReference type="HAMAP-Rule" id="MF_01341"/>
    </source>
</evidence>
<evidence type="ECO:0000256" key="2">
    <source>
        <dbReference type="SAM" id="MobiDB-lite"/>
    </source>
</evidence>
<evidence type="ECO:0000305" key="3"/>
<dbReference type="EMBL" id="AL766843">
    <property type="protein sequence ID" value="CAD45722.1"/>
    <property type="molecule type" value="Genomic_DNA"/>
</dbReference>
<dbReference type="RefSeq" id="WP_000766093.1">
    <property type="nucleotide sequence ID" value="NC_004368.1"/>
</dbReference>
<dbReference type="SMR" id="Q8E7S2"/>
<dbReference type="GeneID" id="66885037"/>
<dbReference type="KEGG" id="san:rplO"/>
<dbReference type="eggNOG" id="COG0200">
    <property type="taxonomic scope" value="Bacteria"/>
</dbReference>
<dbReference type="HOGENOM" id="CLU_055188_4_2_9"/>
<dbReference type="Proteomes" id="UP000000823">
    <property type="component" value="Chromosome"/>
</dbReference>
<dbReference type="GO" id="GO:0022625">
    <property type="term" value="C:cytosolic large ribosomal subunit"/>
    <property type="evidence" value="ECO:0007669"/>
    <property type="project" value="TreeGrafter"/>
</dbReference>
<dbReference type="GO" id="GO:0019843">
    <property type="term" value="F:rRNA binding"/>
    <property type="evidence" value="ECO:0007669"/>
    <property type="project" value="UniProtKB-UniRule"/>
</dbReference>
<dbReference type="GO" id="GO:0003735">
    <property type="term" value="F:structural constituent of ribosome"/>
    <property type="evidence" value="ECO:0007669"/>
    <property type="project" value="InterPro"/>
</dbReference>
<dbReference type="GO" id="GO:0006412">
    <property type="term" value="P:translation"/>
    <property type="evidence" value="ECO:0007669"/>
    <property type="project" value="UniProtKB-UniRule"/>
</dbReference>
<dbReference type="Gene3D" id="3.100.10.10">
    <property type="match status" value="1"/>
</dbReference>
<dbReference type="HAMAP" id="MF_01341">
    <property type="entry name" value="Ribosomal_uL15"/>
    <property type="match status" value="1"/>
</dbReference>
<dbReference type="InterPro" id="IPR030878">
    <property type="entry name" value="Ribosomal_uL15"/>
</dbReference>
<dbReference type="InterPro" id="IPR021131">
    <property type="entry name" value="Ribosomal_uL15/eL18"/>
</dbReference>
<dbReference type="InterPro" id="IPR036227">
    <property type="entry name" value="Ribosomal_uL15/eL18_sf"/>
</dbReference>
<dbReference type="InterPro" id="IPR005749">
    <property type="entry name" value="Ribosomal_uL15_bac-type"/>
</dbReference>
<dbReference type="InterPro" id="IPR001196">
    <property type="entry name" value="Ribosomal_uL15_CS"/>
</dbReference>
<dbReference type="NCBIfam" id="TIGR01071">
    <property type="entry name" value="rplO_bact"/>
    <property type="match status" value="1"/>
</dbReference>
<dbReference type="PANTHER" id="PTHR12934">
    <property type="entry name" value="50S RIBOSOMAL PROTEIN L15"/>
    <property type="match status" value="1"/>
</dbReference>
<dbReference type="PANTHER" id="PTHR12934:SF11">
    <property type="entry name" value="LARGE RIBOSOMAL SUBUNIT PROTEIN UL15M"/>
    <property type="match status" value="1"/>
</dbReference>
<dbReference type="Pfam" id="PF00828">
    <property type="entry name" value="Ribosomal_L27A"/>
    <property type="match status" value="1"/>
</dbReference>
<dbReference type="SUPFAM" id="SSF52080">
    <property type="entry name" value="Ribosomal proteins L15p and L18e"/>
    <property type="match status" value="1"/>
</dbReference>
<dbReference type="PROSITE" id="PS00475">
    <property type="entry name" value="RIBOSOMAL_L15"/>
    <property type="match status" value="1"/>
</dbReference>
<protein>
    <recommendedName>
        <fullName evidence="1">Large ribosomal subunit protein uL15</fullName>
    </recommendedName>
    <alternativeName>
        <fullName evidence="3">50S ribosomal protein L15</fullName>
    </alternativeName>
</protein>
<name>RL15_STRA3</name>
<comment type="function">
    <text evidence="1">Binds to the 23S rRNA.</text>
</comment>
<comment type="subunit">
    <text evidence="1">Part of the 50S ribosomal subunit.</text>
</comment>
<comment type="similarity">
    <text evidence="1">Belongs to the universal ribosomal protein uL15 family.</text>
</comment>
<sequence length="146" mass="15451">MKLHELKPAEGSRKVRNRVGRGTSSGNGKTSGRGQKGQKARSGGGVRLGFEGGQTPLFRRMPKRGFSNINAKEYALVNLDQLNVFEDGTEVTPVVLKEAGIVRAEKSGVKILGNGELTKKLSVKAAKFSKSAEAAITAKGGSIEVI</sequence>
<feature type="chain" id="PRO_0000104819" description="Large ribosomal subunit protein uL15">
    <location>
        <begin position="1"/>
        <end position="146"/>
    </location>
</feature>
<feature type="region of interest" description="Disordered" evidence="2">
    <location>
        <begin position="1"/>
        <end position="59"/>
    </location>
</feature>
<feature type="compositionally biased region" description="Basic and acidic residues" evidence="2">
    <location>
        <begin position="1"/>
        <end position="13"/>
    </location>
</feature>
<feature type="compositionally biased region" description="Gly residues" evidence="2">
    <location>
        <begin position="23"/>
        <end position="35"/>
    </location>
</feature>
<feature type="compositionally biased region" description="Gly residues" evidence="2">
    <location>
        <begin position="42"/>
        <end position="52"/>
    </location>
</feature>
<accession>Q8E7S2</accession>
<gene>
    <name evidence="1" type="primary">rplO</name>
    <name type="ordered locus">gbs0077</name>
</gene>
<reference key="1">
    <citation type="journal article" date="2002" name="Mol. Microbiol.">
        <title>Genome sequence of Streptococcus agalactiae, a pathogen causing invasive neonatal disease.</title>
        <authorList>
            <person name="Glaser P."/>
            <person name="Rusniok C."/>
            <person name="Buchrieser C."/>
            <person name="Chevalier F."/>
            <person name="Frangeul L."/>
            <person name="Msadek T."/>
            <person name="Zouine M."/>
            <person name="Couve E."/>
            <person name="Lalioui L."/>
            <person name="Poyart C."/>
            <person name="Trieu-Cuot P."/>
            <person name="Kunst F."/>
        </authorList>
    </citation>
    <scope>NUCLEOTIDE SEQUENCE [LARGE SCALE GENOMIC DNA]</scope>
    <source>
        <strain>NEM316</strain>
    </source>
</reference>
<proteinExistence type="inferred from homology"/>
<keyword id="KW-0687">Ribonucleoprotein</keyword>
<keyword id="KW-0689">Ribosomal protein</keyword>
<keyword id="KW-0694">RNA-binding</keyword>
<keyword id="KW-0699">rRNA-binding</keyword>